<organism>
    <name type="scientific">Methanosarcina acetivorans (strain ATCC 35395 / DSM 2834 / JCM 12185 / C2A)</name>
    <dbReference type="NCBI Taxonomy" id="188937"/>
    <lineage>
        <taxon>Archaea</taxon>
        <taxon>Methanobacteriati</taxon>
        <taxon>Methanobacteriota</taxon>
        <taxon>Stenosarchaea group</taxon>
        <taxon>Methanomicrobia</taxon>
        <taxon>Methanosarcinales</taxon>
        <taxon>Methanosarcinaceae</taxon>
        <taxon>Methanosarcina</taxon>
    </lineage>
</organism>
<keyword id="KW-0067">ATP-binding</keyword>
<keyword id="KW-0436">Ligase</keyword>
<keyword id="KW-0460">Magnesium</keyword>
<keyword id="KW-0464">Manganese</keyword>
<keyword id="KW-0479">Metal-binding</keyword>
<keyword id="KW-0547">Nucleotide-binding</keyword>
<keyword id="KW-0658">Purine biosynthesis</keyword>
<keyword id="KW-1185">Reference proteome</keyword>
<proteinExistence type="inferred from homology"/>
<accession>Q8TKT6</accession>
<evidence type="ECO:0000250" key="1"/>
<evidence type="ECO:0000255" key="2">
    <source>
        <dbReference type="HAMAP-Rule" id="MF_00138"/>
    </source>
</evidence>
<name>PUR2_METAC</name>
<comment type="catalytic activity">
    <reaction evidence="2">
        <text>5-phospho-beta-D-ribosylamine + glycine + ATP = N(1)-(5-phospho-beta-D-ribosyl)glycinamide + ADP + phosphate + H(+)</text>
        <dbReference type="Rhea" id="RHEA:17453"/>
        <dbReference type="ChEBI" id="CHEBI:15378"/>
        <dbReference type="ChEBI" id="CHEBI:30616"/>
        <dbReference type="ChEBI" id="CHEBI:43474"/>
        <dbReference type="ChEBI" id="CHEBI:57305"/>
        <dbReference type="ChEBI" id="CHEBI:58681"/>
        <dbReference type="ChEBI" id="CHEBI:143788"/>
        <dbReference type="ChEBI" id="CHEBI:456216"/>
        <dbReference type="EC" id="6.3.4.13"/>
    </reaction>
</comment>
<comment type="cofactor">
    <cofactor evidence="1">
        <name>Mg(2+)</name>
        <dbReference type="ChEBI" id="CHEBI:18420"/>
    </cofactor>
    <cofactor evidence="1">
        <name>Mn(2+)</name>
        <dbReference type="ChEBI" id="CHEBI:29035"/>
    </cofactor>
    <text evidence="1">Binds 2 magnesium or manganese ions per subunit.</text>
</comment>
<comment type="pathway">
    <text evidence="2">Purine metabolism; IMP biosynthesis via de novo pathway; N(1)-(5-phospho-D-ribosyl)glycinamide from 5-phospho-alpha-D-ribose 1-diphosphate: step 2/2.</text>
</comment>
<comment type="similarity">
    <text evidence="2">Belongs to the GARS family.</text>
</comment>
<feature type="chain" id="PRO_0000151509" description="Phosphoribosylamine--glycine ligase">
    <location>
        <begin position="1"/>
        <end position="441"/>
    </location>
</feature>
<feature type="domain" description="ATP-grasp" evidence="2">
    <location>
        <begin position="112"/>
        <end position="319"/>
    </location>
</feature>
<feature type="binding site" evidence="2">
    <location>
        <begin position="139"/>
        <end position="196"/>
    </location>
    <ligand>
        <name>ATP</name>
        <dbReference type="ChEBI" id="CHEBI:30616"/>
    </ligand>
</feature>
<feature type="binding site" evidence="2">
    <location>
        <position position="277"/>
    </location>
    <ligand>
        <name>Mg(2+)</name>
        <dbReference type="ChEBI" id="CHEBI:18420"/>
        <label>1</label>
    </ligand>
</feature>
<feature type="binding site" evidence="2">
    <location>
        <position position="277"/>
    </location>
    <ligand>
        <name>Mn(2+)</name>
        <dbReference type="ChEBI" id="CHEBI:29035"/>
        <label>1</label>
    </ligand>
</feature>
<feature type="binding site" evidence="2">
    <location>
        <position position="289"/>
    </location>
    <ligand>
        <name>Mg(2+)</name>
        <dbReference type="ChEBI" id="CHEBI:18420"/>
        <label>1</label>
    </ligand>
</feature>
<feature type="binding site" evidence="2">
    <location>
        <position position="289"/>
    </location>
    <ligand>
        <name>Mg(2+)</name>
        <dbReference type="ChEBI" id="CHEBI:18420"/>
        <label>2</label>
    </ligand>
</feature>
<feature type="binding site" evidence="2">
    <location>
        <position position="289"/>
    </location>
    <ligand>
        <name>Mn(2+)</name>
        <dbReference type="ChEBI" id="CHEBI:29035"/>
        <label>1</label>
    </ligand>
</feature>
<feature type="binding site" evidence="2">
    <location>
        <position position="289"/>
    </location>
    <ligand>
        <name>Mn(2+)</name>
        <dbReference type="ChEBI" id="CHEBI:29035"/>
        <label>2</label>
    </ligand>
</feature>
<feature type="binding site" evidence="2">
    <location>
        <position position="291"/>
    </location>
    <ligand>
        <name>Mg(2+)</name>
        <dbReference type="ChEBI" id="CHEBI:18420"/>
        <label>2</label>
    </ligand>
</feature>
<feature type="binding site" evidence="2">
    <location>
        <position position="291"/>
    </location>
    <ligand>
        <name>Mn(2+)</name>
        <dbReference type="ChEBI" id="CHEBI:29035"/>
        <label>2</label>
    </ligand>
</feature>
<protein>
    <recommendedName>
        <fullName evidence="2">Phosphoribosylamine--glycine ligase</fullName>
        <ecNumber evidence="2">6.3.4.13</ecNumber>
    </recommendedName>
    <alternativeName>
        <fullName evidence="2">GARS</fullName>
    </alternativeName>
    <alternativeName>
        <fullName evidence="2">Glycinamide ribonucleotide synthetase</fullName>
    </alternativeName>
    <alternativeName>
        <fullName evidence="2">Phosphoribosylglycinamide synthetase</fullName>
    </alternativeName>
</protein>
<reference key="1">
    <citation type="journal article" date="2002" name="Genome Res.">
        <title>The genome of Methanosarcina acetivorans reveals extensive metabolic and physiological diversity.</title>
        <authorList>
            <person name="Galagan J.E."/>
            <person name="Nusbaum C."/>
            <person name="Roy A."/>
            <person name="Endrizzi M.G."/>
            <person name="Macdonald P."/>
            <person name="FitzHugh W."/>
            <person name="Calvo S."/>
            <person name="Engels R."/>
            <person name="Smirnov S."/>
            <person name="Atnoor D."/>
            <person name="Brown A."/>
            <person name="Allen N."/>
            <person name="Naylor J."/>
            <person name="Stange-Thomann N."/>
            <person name="DeArellano K."/>
            <person name="Johnson R."/>
            <person name="Linton L."/>
            <person name="McEwan P."/>
            <person name="McKernan K."/>
            <person name="Talamas J."/>
            <person name="Tirrell A."/>
            <person name="Ye W."/>
            <person name="Zimmer A."/>
            <person name="Barber R.D."/>
            <person name="Cann I."/>
            <person name="Graham D.E."/>
            <person name="Grahame D.A."/>
            <person name="Guss A.M."/>
            <person name="Hedderich R."/>
            <person name="Ingram-Smith C."/>
            <person name="Kuettner H.C."/>
            <person name="Krzycki J.A."/>
            <person name="Leigh J.A."/>
            <person name="Li W."/>
            <person name="Liu J."/>
            <person name="Mukhopadhyay B."/>
            <person name="Reeve J.N."/>
            <person name="Smith K."/>
            <person name="Springer T.A."/>
            <person name="Umayam L.A."/>
            <person name="White O."/>
            <person name="White R.H."/>
            <person name="de Macario E.C."/>
            <person name="Ferry J.G."/>
            <person name="Jarrell K.F."/>
            <person name="Jing H."/>
            <person name="Macario A.J.L."/>
            <person name="Paulsen I.T."/>
            <person name="Pritchett M."/>
            <person name="Sowers K.R."/>
            <person name="Swanson R.V."/>
            <person name="Zinder S.H."/>
            <person name="Lander E."/>
            <person name="Metcalf W.W."/>
            <person name="Birren B."/>
        </authorList>
    </citation>
    <scope>NUCLEOTIDE SEQUENCE [LARGE SCALE GENOMIC DNA]</scope>
    <source>
        <strain>ATCC 35395 / DSM 2834 / JCM 12185 / C2A</strain>
    </source>
</reference>
<sequence>MKMKILLIGGGGREHAIAEGIKESKHNPILYALMAKKNPGIAALCEDFLLEKETEVEKIVEYAKARNIEMAFVGPEAPLAAGVADALWEAGIPVVGPKKACAVIEFDKAWARNFMKKYGIEGCPAYEVFTEEAPAHAFIEKLGDVAVKPSGLTGGKGVKVMGDQLPDLKAAKDYTSELLEKGPVVIEERFIGEEFTLQAFVDGKNLAFFPAVQDHKRAYEGDLGPNTGGMGSYTDAGEILPFMLAGDIEQAKKIMQHTVTALHEETGTGYQGVLYGQFILTASGPKVVEFNARFGDPEAMNVIPLIETDFTEIMSAVVKSTLDSLPVKFSRKATVCKYAVPAGYPDNPEKDSEVLVGDVGEASVYYASVYEKEGKIYTTGSRAVAVVGRAETIDAAEKIAQNALENIQGKLFFRKDIGTASLIQKRIDHMKELRGGLSQKQ</sequence>
<gene>
    <name evidence="2" type="primary">purD</name>
    <name type="ordered locus">MA_3309</name>
</gene>
<dbReference type="EC" id="6.3.4.13" evidence="2"/>
<dbReference type="EMBL" id="AE010299">
    <property type="protein sequence ID" value="AAM06679.1"/>
    <property type="molecule type" value="Genomic_DNA"/>
</dbReference>
<dbReference type="SMR" id="Q8TKT6"/>
<dbReference type="FunCoup" id="Q8TKT6">
    <property type="interactions" value="95"/>
</dbReference>
<dbReference type="STRING" id="188937.MA_3309"/>
<dbReference type="EnsemblBacteria" id="AAM06679">
    <property type="protein sequence ID" value="AAM06679"/>
    <property type="gene ID" value="MA_3309"/>
</dbReference>
<dbReference type="KEGG" id="mac:MA_3309"/>
<dbReference type="HOGENOM" id="CLU_027420_3_0_2"/>
<dbReference type="InParanoid" id="Q8TKT6"/>
<dbReference type="PhylomeDB" id="Q8TKT6"/>
<dbReference type="UniPathway" id="UPA00074">
    <property type="reaction ID" value="UER00125"/>
</dbReference>
<dbReference type="Proteomes" id="UP000002487">
    <property type="component" value="Chromosome"/>
</dbReference>
<dbReference type="GO" id="GO:0005524">
    <property type="term" value="F:ATP binding"/>
    <property type="evidence" value="ECO:0007669"/>
    <property type="project" value="UniProtKB-KW"/>
</dbReference>
<dbReference type="GO" id="GO:0046872">
    <property type="term" value="F:metal ion binding"/>
    <property type="evidence" value="ECO:0007669"/>
    <property type="project" value="UniProtKB-KW"/>
</dbReference>
<dbReference type="GO" id="GO:0004637">
    <property type="term" value="F:phosphoribosylamine-glycine ligase activity"/>
    <property type="evidence" value="ECO:0007669"/>
    <property type="project" value="UniProtKB-UniRule"/>
</dbReference>
<dbReference type="GO" id="GO:0006189">
    <property type="term" value="P:'de novo' IMP biosynthetic process"/>
    <property type="evidence" value="ECO:0007669"/>
    <property type="project" value="UniProtKB-UniRule"/>
</dbReference>
<dbReference type="GO" id="GO:0009113">
    <property type="term" value="P:purine nucleobase biosynthetic process"/>
    <property type="evidence" value="ECO:0007669"/>
    <property type="project" value="InterPro"/>
</dbReference>
<dbReference type="Gene3D" id="3.40.50.20">
    <property type="match status" value="1"/>
</dbReference>
<dbReference type="Gene3D" id="3.30.1490.20">
    <property type="entry name" value="ATP-grasp fold, A domain"/>
    <property type="match status" value="1"/>
</dbReference>
<dbReference type="Gene3D" id="3.30.470.20">
    <property type="entry name" value="ATP-grasp fold, B domain"/>
    <property type="match status" value="1"/>
</dbReference>
<dbReference type="Gene3D" id="3.90.600.10">
    <property type="entry name" value="Phosphoribosylglycinamide synthetase, C-terminal domain"/>
    <property type="match status" value="1"/>
</dbReference>
<dbReference type="HAMAP" id="MF_00138">
    <property type="entry name" value="GARS"/>
    <property type="match status" value="1"/>
</dbReference>
<dbReference type="InterPro" id="IPR011761">
    <property type="entry name" value="ATP-grasp"/>
</dbReference>
<dbReference type="InterPro" id="IPR013815">
    <property type="entry name" value="ATP_grasp_subdomain_1"/>
</dbReference>
<dbReference type="InterPro" id="IPR016185">
    <property type="entry name" value="PreATP-grasp_dom_sf"/>
</dbReference>
<dbReference type="InterPro" id="IPR020561">
    <property type="entry name" value="PRibGlycinamid_synth_ATP-grasp"/>
</dbReference>
<dbReference type="InterPro" id="IPR000115">
    <property type="entry name" value="PRibGlycinamide_synth"/>
</dbReference>
<dbReference type="InterPro" id="IPR020560">
    <property type="entry name" value="PRibGlycinamide_synth_C-dom"/>
</dbReference>
<dbReference type="InterPro" id="IPR037123">
    <property type="entry name" value="PRibGlycinamide_synth_C_sf"/>
</dbReference>
<dbReference type="InterPro" id="IPR020559">
    <property type="entry name" value="PRibGlycinamide_synth_CS"/>
</dbReference>
<dbReference type="InterPro" id="IPR020562">
    <property type="entry name" value="PRibGlycinamide_synth_N"/>
</dbReference>
<dbReference type="InterPro" id="IPR011054">
    <property type="entry name" value="Rudment_hybrid_motif"/>
</dbReference>
<dbReference type="NCBIfam" id="TIGR00877">
    <property type="entry name" value="purD"/>
    <property type="match status" value="1"/>
</dbReference>
<dbReference type="PANTHER" id="PTHR43472">
    <property type="entry name" value="PHOSPHORIBOSYLAMINE--GLYCINE LIGASE"/>
    <property type="match status" value="1"/>
</dbReference>
<dbReference type="PANTHER" id="PTHR43472:SF1">
    <property type="entry name" value="PHOSPHORIBOSYLAMINE--GLYCINE LIGASE, CHLOROPLASTIC"/>
    <property type="match status" value="1"/>
</dbReference>
<dbReference type="Pfam" id="PF01071">
    <property type="entry name" value="GARS_A"/>
    <property type="match status" value="1"/>
</dbReference>
<dbReference type="Pfam" id="PF02843">
    <property type="entry name" value="GARS_C"/>
    <property type="match status" value="1"/>
</dbReference>
<dbReference type="Pfam" id="PF02844">
    <property type="entry name" value="GARS_N"/>
    <property type="match status" value="1"/>
</dbReference>
<dbReference type="SMART" id="SM01209">
    <property type="entry name" value="GARS_A"/>
    <property type="match status" value="1"/>
</dbReference>
<dbReference type="SMART" id="SM01210">
    <property type="entry name" value="GARS_C"/>
    <property type="match status" value="1"/>
</dbReference>
<dbReference type="SUPFAM" id="SSF56059">
    <property type="entry name" value="Glutathione synthetase ATP-binding domain-like"/>
    <property type="match status" value="1"/>
</dbReference>
<dbReference type="SUPFAM" id="SSF52440">
    <property type="entry name" value="PreATP-grasp domain"/>
    <property type="match status" value="1"/>
</dbReference>
<dbReference type="SUPFAM" id="SSF51246">
    <property type="entry name" value="Rudiment single hybrid motif"/>
    <property type="match status" value="1"/>
</dbReference>
<dbReference type="PROSITE" id="PS50975">
    <property type="entry name" value="ATP_GRASP"/>
    <property type="match status" value="1"/>
</dbReference>
<dbReference type="PROSITE" id="PS00184">
    <property type="entry name" value="GARS"/>
    <property type="match status" value="1"/>
</dbReference>